<organism>
    <name type="scientific">Micromonospora sp. (strain ATCC 39149 / NRRL 15099 / SCC 1413)</name>
    <dbReference type="NCBI Taxonomy" id="219305"/>
    <lineage>
        <taxon>Bacteria</taxon>
        <taxon>Bacillati</taxon>
        <taxon>Actinomycetota</taxon>
        <taxon>Actinomycetes</taxon>
        <taxon>Micromonosporales</taxon>
        <taxon>Micromonosporaceae</taxon>
        <taxon>Micromonospora</taxon>
    </lineage>
</organism>
<protein>
    <recommendedName>
        <fullName evidence="1 4">UDP-N-acetylmuramoyl-L-alanine--L-glutamate ligase</fullName>
        <ecNumber evidence="1 2">6.3.2.53</ecNumber>
    </recommendedName>
    <alternativeName>
        <fullName evidence="1 4">UDP-N-acetylmuramoyl-L-alanyl-L-glutamate synthetase</fullName>
        <shortName evidence="1 3">UDP-MurNAc-L-Ala-L-Glu synthetase</shortName>
    </alternativeName>
</protein>
<proteinExistence type="evidence at protein level"/>
<feature type="chain" id="PRO_0000446508" description="UDP-N-acetylmuramoyl-L-alanine--L-glutamate ligase">
    <location>
        <begin position="1"/>
        <end position="452"/>
    </location>
</feature>
<feature type="binding site" evidence="1">
    <location>
        <begin position="118"/>
        <end position="124"/>
    </location>
    <ligand>
        <name>ATP</name>
        <dbReference type="ChEBI" id="CHEBI:30616"/>
    </ligand>
</feature>
<dbReference type="EC" id="6.3.2.53" evidence="1 2"/>
<dbReference type="EMBL" id="GG657738">
    <property type="protein sequence ID" value="EEP70682.1"/>
    <property type="molecule type" value="Genomic_DNA"/>
</dbReference>
<dbReference type="RefSeq" id="WP_007071958.1">
    <property type="nucleotide sequence ID" value="NZ_GG657738.1"/>
</dbReference>
<dbReference type="SMR" id="C4RJF7"/>
<dbReference type="STRING" id="219305.MCAG_01009"/>
<dbReference type="eggNOG" id="COG0771">
    <property type="taxonomic scope" value="Bacteria"/>
</dbReference>
<dbReference type="HOGENOM" id="CLU_032540_4_1_11"/>
<dbReference type="OrthoDB" id="9809796at2"/>
<dbReference type="UniPathway" id="UPA00219"/>
<dbReference type="Proteomes" id="UP000010307">
    <property type="component" value="Unassembled WGS sequence"/>
</dbReference>
<dbReference type="GO" id="GO:0005737">
    <property type="term" value="C:cytoplasm"/>
    <property type="evidence" value="ECO:0007669"/>
    <property type="project" value="UniProtKB-SubCell"/>
</dbReference>
<dbReference type="GO" id="GO:0005524">
    <property type="term" value="F:ATP binding"/>
    <property type="evidence" value="ECO:0007669"/>
    <property type="project" value="UniProtKB-UniRule"/>
</dbReference>
<dbReference type="GO" id="GO:0008764">
    <property type="term" value="F:UDP-N-acetylmuramoylalanine-D-glutamate ligase activity"/>
    <property type="evidence" value="ECO:0007669"/>
    <property type="project" value="InterPro"/>
</dbReference>
<dbReference type="GO" id="GO:0051301">
    <property type="term" value="P:cell division"/>
    <property type="evidence" value="ECO:0007669"/>
    <property type="project" value="UniProtKB-KW"/>
</dbReference>
<dbReference type="GO" id="GO:0071555">
    <property type="term" value="P:cell wall organization"/>
    <property type="evidence" value="ECO:0007669"/>
    <property type="project" value="UniProtKB-KW"/>
</dbReference>
<dbReference type="GO" id="GO:0009252">
    <property type="term" value="P:peptidoglycan biosynthetic process"/>
    <property type="evidence" value="ECO:0007669"/>
    <property type="project" value="UniProtKB-UniRule"/>
</dbReference>
<dbReference type="GO" id="GO:0008360">
    <property type="term" value="P:regulation of cell shape"/>
    <property type="evidence" value="ECO:0007669"/>
    <property type="project" value="UniProtKB-KW"/>
</dbReference>
<dbReference type="Gene3D" id="3.90.190.20">
    <property type="entry name" value="Mur ligase, C-terminal domain"/>
    <property type="match status" value="1"/>
</dbReference>
<dbReference type="Gene3D" id="3.40.1190.10">
    <property type="entry name" value="Mur-like, catalytic domain"/>
    <property type="match status" value="1"/>
</dbReference>
<dbReference type="Gene3D" id="3.40.50.720">
    <property type="entry name" value="NAD(P)-binding Rossmann-like Domain"/>
    <property type="match status" value="1"/>
</dbReference>
<dbReference type="HAMAP" id="MF_00639">
    <property type="entry name" value="MurD"/>
    <property type="match status" value="1"/>
</dbReference>
<dbReference type="HAMAP" id="MF_02208">
    <property type="entry name" value="MurD2_subfam"/>
    <property type="match status" value="1"/>
</dbReference>
<dbReference type="InterPro" id="IPR036565">
    <property type="entry name" value="Mur-like_cat_sf"/>
</dbReference>
<dbReference type="InterPro" id="IPR036615">
    <property type="entry name" value="Mur_ligase_C_dom_sf"/>
</dbReference>
<dbReference type="InterPro" id="IPR013221">
    <property type="entry name" value="Mur_ligase_cen"/>
</dbReference>
<dbReference type="InterPro" id="IPR005762">
    <property type="entry name" value="MurD"/>
</dbReference>
<dbReference type="InterPro" id="IPR043687">
    <property type="entry name" value="MurD2"/>
</dbReference>
<dbReference type="NCBIfam" id="TIGR01087">
    <property type="entry name" value="murD"/>
    <property type="match status" value="1"/>
</dbReference>
<dbReference type="PANTHER" id="PTHR43692">
    <property type="entry name" value="UDP-N-ACETYLMURAMOYLALANINE--D-GLUTAMATE LIGASE"/>
    <property type="match status" value="1"/>
</dbReference>
<dbReference type="PANTHER" id="PTHR43692:SF1">
    <property type="entry name" value="UDP-N-ACETYLMURAMOYLALANINE--D-GLUTAMATE LIGASE"/>
    <property type="match status" value="1"/>
</dbReference>
<dbReference type="Pfam" id="PF08245">
    <property type="entry name" value="Mur_ligase_M"/>
    <property type="match status" value="1"/>
</dbReference>
<dbReference type="SUPFAM" id="SSF51984">
    <property type="entry name" value="MurCD N-terminal domain"/>
    <property type="match status" value="1"/>
</dbReference>
<dbReference type="SUPFAM" id="SSF53623">
    <property type="entry name" value="MurD-like peptide ligases, catalytic domain"/>
    <property type="match status" value="1"/>
</dbReference>
<dbReference type="SUPFAM" id="SSF53244">
    <property type="entry name" value="MurD-like peptide ligases, peptide-binding domain"/>
    <property type="match status" value="1"/>
</dbReference>
<sequence length="452" mass="47604">MRLSDLRGRTVAVWGAGREGRAAVIAIAAHGPADLVAVDDSANFLALPWEGPLAEAAPLVTGEEGFARLAAAEVVVRSPGVPNTHPWLVELRGRGVTVTQGSALWMADHARRTVGVTGSKGKSTTSSLISHLLTAVDRPNVFGGNIGVPLLDLPDADLYVLELSSYQCADLTDSPRVAVVTALFPEHLDAHGGEREYYRDKLNLLAHGPQTIVVNGADPRLAAELGDRPAVRAGSPDTTHVAPGPDGTPWFHLGDRPLFPRAVLPLVGRHNEGNLCVALAVLAALGVDVVARADALAVAVAGFQGLAHRLTEIADPSGLTFVDDTLATSPYAAMHAIDAYEGRPVTVIVGGADRGLDYAPLREHLAEREITVLGIPDSGQRIVATLAGLPRVRAEVVDDLVAAVRRARELTPADGVVLLSPAAPSYGRFRNFEHRSEVFAEAVRDTAGHPAR</sequence>
<comment type="function">
    <text evidence="1 2">Cell wall formation. Catalyzes the addition of L-glutamate to the nucleotide precursor UDP-N-acetylmuramoyl-L-alanine.</text>
</comment>
<comment type="catalytic activity">
    <reaction evidence="1 2">
        <text>UDP-N-acetyl-alpha-D-muramoyl-L-alanine + L-glutamate + ATP = UDP-N-acetyl-alpha-D-muramoyl-L-alanyl-L-glutamate + ADP + phosphate + H(+)</text>
        <dbReference type="Rhea" id="RHEA:58816"/>
        <dbReference type="ChEBI" id="CHEBI:15378"/>
        <dbReference type="ChEBI" id="CHEBI:29985"/>
        <dbReference type="ChEBI" id="CHEBI:30616"/>
        <dbReference type="ChEBI" id="CHEBI:43474"/>
        <dbReference type="ChEBI" id="CHEBI:83898"/>
        <dbReference type="ChEBI" id="CHEBI:142725"/>
        <dbReference type="ChEBI" id="CHEBI:456216"/>
        <dbReference type="EC" id="6.3.2.53"/>
    </reaction>
</comment>
<comment type="pathway">
    <text evidence="1 5">Cell wall biogenesis; peptidoglycan biosynthesis.</text>
</comment>
<comment type="subcellular location">
    <subcellularLocation>
        <location evidence="1 4">Cytoplasm</location>
    </subcellularLocation>
</comment>
<comment type="similarity">
    <text evidence="1 4">Belongs to the MurCDEF family. MurD2 subfamily.</text>
</comment>
<keyword id="KW-0067">ATP-binding</keyword>
<keyword id="KW-0131">Cell cycle</keyword>
<keyword id="KW-0132">Cell division</keyword>
<keyword id="KW-0133">Cell shape</keyword>
<keyword id="KW-0961">Cell wall biogenesis/degradation</keyword>
<keyword id="KW-0963">Cytoplasm</keyword>
<keyword id="KW-0436">Ligase</keyword>
<keyword id="KW-0547">Nucleotide-binding</keyword>
<keyword id="KW-0573">Peptidoglycan synthesis</keyword>
<keyword id="KW-1185">Reference proteome</keyword>
<accession>C4RJF7</accession>
<gene>
    <name evidence="1 3" type="primary">murD2</name>
    <name evidence="6" type="ORF">MCAG_01009</name>
</gene>
<name>MURD2_MICS3</name>
<evidence type="ECO:0000255" key="1">
    <source>
        <dbReference type="HAMAP-Rule" id="MF_02208"/>
    </source>
</evidence>
<evidence type="ECO:0000269" key="2">
    <source>
    </source>
</evidence>
<evidence type="ECO:0000303" key="3">
    <source>
    </source>
</evidence>
<evidence type="ECO:0000305" key="4"/>
<evidence type="ECO:0000305" key="5">
    <source>
    </source>
</evidence>
<evidence type="ECO:0000312" key="6">
    <source>
        <dbReference type="EMBL" id="EEP70682.1"/>
    </source>
</evidence>
<reference key="1">
    <citation type="submission" date="2009-02" db="EMBL/GenBank/DDBJ databases">
        <title>The genome sequence of Micromonospora carbonacea var. africana strain ATCC 39149.</title>
        <authorList>
            <consortium name="The Broad Institute Genome Sequencing Platform"/>
            <consortium name="Broad Institute Microbial Sequencing Center"/>
            <person name="Fischbach M."/>
            <person name="Godfrey P."/>
            <person name="Ward D."/>
            <person name="Young S."/>
            <person name="Kodira C.D."/>
            <person name="Zeng Q."/>
            <person name="Koehrsen M."/>
            <person name="Alvarado L."/>
            <person name="Berlin A.M."/>
            <person name="Borenstein D."/>
            <person name="Chen Z."/>
            <person name="Engels R."/>
            <person name="Freedman E."/>
            <person name="Gellesch M."/>
            <person name="Goldberg J."/>
            <person name="Griggs A."/>
            <person name="Gujja S."/>
            <person name="Heiman D.I."/>
            <person name="Hepburn T.A."/>
            <person name="Howarth C."/>
            <person name="Jen D."/>
            <person name="Larson L."/>
            <person name="Lewis B."/>
            <person name="Mehta T."/>
            <person name="Park D."/>
            <person name="Pearson M."/>
            <person name="Roberts A."/>
            <person name="Saif S."/>
            <person name="Shea T.D."/>
            <person name="Shenoy N."/>
            <person name="Sisk P."/>
            <person name="Stolte C."/>
            <person name="Sykes S.N."/>
            <person name="Walk T."/>
            <person name="White J."/>
            <person name="Yandava C."/>
            <person name="Straight P."/>
            <person name="Clardy J."/>
            <person name="Hung D."/>
            <person name="Kolter R."/>
            <person name="Mekalanos J."/>
            <person name="Walker S."/>
            <person name="Walsh C.T."/>
            <person name="Wieland-Brown L.C."/>
            <person name="Galagan J."/>
            <person name="Nusbaum C."/>
            <person name="Birren B."/>
        </authorList>
    </citation>
    <scope>NUCLEOTIDE SEQUENCE [LARGE SCALE GENOMIC DNA]</scope>
    <source>
        <strain>ATCC 39149 / NRRL 15099 / SCC 1413</strain>
    </source>
</reference>
<reference key="2">
    <citation type="journal article" date="2017" name="J. Am. Chem. Soc.">
        <title>A glycopeptidyl-glutamate epimerase for bacterial peptidoglycan biosynthesis.</title>
        <authorList>
            <person name="Feng R."/>
            <person name="Satoh Y."/>
            <person name="Ogasawara Y."/>
            <person name="Yoshimura T."/>
            <person name="Dairi T."/>
        </authorList>
    </citation>
    <scope>FUNCTION</scope>
    <scope>CATALYTIC ACTIVITY</scope>
    <scope>PATHWAY</scope>
    <source>
        <strain>ATCC 39149 / NRRL 15099 / SCC 1413</strain>
    </source>
</reference>